<name>MLTF_ECOL6</name>
<organism>
    <name type="scientific">Escherichia coli O6:H1 (strain CFT073 / ATCC 700928 / UPEC)</name>
    <dbReference type="NCBI Taxonomy" id="199310"/>
    <lineage>
        <taxon>Bacteria</taxon>
        <taxon>Pseudomonadati</taxon>
        <taxon>Pseudomonadota</taxon>
        <taxon>Gammaproteobacteria</taxon>
        <taxon>Enterobacterales</taxon>
        <taxon>Enterobacteriaceae</taxon>
        <taxon>Escherichia</taxon>
    </lineage>
</organism>
<comment type="function">
    <text evidence="1">Murein-degrading enzyme that degrades murein glycan strands and insoluble, high-molecular weight murein sacculi, with the concomitant formation of a 1,6-anhydromuramoyl product. Lytic transglycosylases (LTs) play an integral role in the metabolism of the peptidoglycan (PG) sacculus. Their lytic action creates space within the PG sacculus to allow for its expansion as well as for the insertion of various structures such as secretion systems and flagella.</text>
</comment>
<comment type="catalytic activity">
    <reaction evidence="1">
        <text>Exolytic cleavage of the (1-&gt;4)-beta-glycosidic linkage between N-acetylmuramic acid (MurNAc) and N-acetylglucosamine (GlcNAc) residues in peptidoglycan, from either the reducing or the non-reducing ends of the peptidoglycan chains, with concomitant formation of a 1,6-anhydrobond in the MurNAc residue.</text>
        <dbReference type="EC" id="4.2.2.n1"/>
    </reaction>
</comment>
<comment type="subcellular location">
    <subcellularLocation>
        <location>Cell outer membrane</location>
        <topology>Peripheral membrane protein</topology>
    </subcellularLocation>
    <text evidence="1">Attached to the inner leaflet of the outer membrane.</text>
</comment>
<comment type="domain">
    <text evidence="1">The N-terminal domain does not have lytic activity and probably modulates enzymatic activity. The C-terminal domain is the catalytic active domain.</text>
</comment>
<comment type="similarity">
    <text evidence="1">In the N-terminal section; belongs to the bacterial solute-binding protein 3 family.</text>
</comment>
<comment type="similarity">
    <text evidence="1">In the C-terminal section; belongs to the transglycosylase Slt family.</text>
</comment>
<feature type="signal peptide" evidence="1">
    <location>
        <begin position="1"/>
        <end position="21"/>
    </location>
</feature>
<feature type="chain" id="PRO_0000353933" description="Membrane-bound lytic murein transglycosylase F">
    <location>
        <begin position="22"/>
        <end position="518"/>
    </location>
</feature>
<feature type="region of interest" description="Non-LT domain" evidence="1">
    <location>
        <begin position="22"/>
        <end position="269"/>
    </location>
</feature>
<feature type="region of interest" description="LT domain" evidence="1">
    <location>
        <begin position="270"/>
        <end position="518"/>
    </location>
</feature>
<feature type="active site" evidence="1">
    <location>
        <position position="314"/>
    </location>
</feature>
<sequence length="518" mass="58346">MKKLKINYLFIGILALLLAVALWPSIPWFGKADNRIAAIQARGELRVSTIHTPLTYNEINGKPFGLDYELAKQFADYLGVKLKVTVRQNISQLFDDLDNGNADLLAAGLVYNSERVKNYQPGPTYYSVSQQLVYKVGQYRPRTLGNLTAEQLTVAPGHVVVNDLQTLKDTKFPELSWKVDDKKGSVELMEDVIEGKLDYTIADSVAISLFQRVHPELAVALDITDEQPVTWFSPLDGDNTLSAALLDFFNEMNEDGTLARIEEKYLGHGDDFDYVDTRTFLRAVDAVLPQLKPLFEKYAEEIDWRLLAAIAYQESHWDAQATSPTGVRGMMMLTKNTAQSLGITDRTDAEQSISGGVRYLQDMMSKVPESVPENERIWFALAAYNMGYAHMLDARALTTKTKGNPDSWADVKQRLPLLSQKPYYSKLTYGYARGHEAYAYVENIRKYQISLVGYLQEKEKQATEAAMQLAQDYPAVSPTELGKEKFPFLSFLSQSSSNYLTHSPSLLFSRKGSEEKQN</sequence>
<dbReference type="EC" id="4.2.2.n1" evidence="1"/>
<dbReference type="EMBL" id="AE014075">
    <property type="protein sequence ID" value="AAN81530.1"/>
    <property type="molecule type" value="Genomic_DNA"/>
</dbReference>
<dbReference type="RefSeq" id="WP_000734201.1">
    <property type="nucleotide sequence ID" value="NZ_CP051263.1"/>
</dbReference>
<dbReference type="SMR" id="Q8FF25"/>
<dbReference type="STRING" id="199310.c3081"/>
<dbReference type="CAZy" id="GH23">
    <property type="family name" value="Glycoside Hydrolase Family 23"/>
</dbReference>
<dbReference type="KEGG" id="ecc:c3081"/>
<dbReference type="eggNOG" id="COG4623">
    <property type="taxonomic scope" value="Bacteria"/>
</dbReference>
<dbReference type="HOGENOM" id="CLU_027494_0_1_6"/>
<dbReference type="BioCyc" id="ECOL199310:C3081-MONOMER"/>
<dbReference type="Proteomes" id="UP000001410">
    <property type="component" value="Chromosome"/>
</dbReference>
<dbReference type="GO" id="GO:0009279">
    <property type="term" value="C:cell outer membrane"/>
    <property type="evidence" value="ECO:0007669"/>
    <property type="project" value="UniProtKB-SubCell"/>
</dbReference>
<dbReference type="GO" id="GO:0008933">
    <property type="term" value="F:peptidoglycan lytic transglycosylase activity"/>
    <property type="evidence" value="ECO:0007669"/>
    <property type="project" value="UniProtKB-UniRule"/>
</dbReference>
<dbReference type="GO" id="GO:0016998">
    <property type="term" value="P:cell wall macromolecule catabolic process"/>
    <property type="evidence" value="ECO:0007669"/>
    <property type="project" value="UniProtKB-UniRule"/>
</dbReference>
<dbReference type="GO" id="GO:0071555">
    <property type="term" value="P:cell wall organization"/>
    <property type="evidence" value="ECO:0007669"/>
    <property type="project" value="UniProtKB-KW"/>
</dbReference>
<dbReference type="GO" id="GO:0009253">
    <property type="term" value="P:peptidoglycan catabolic process"/>
    <property type="evidence" value="ECO:0007669"/>
    <property type="project" value="TreeGrafter"/>
</dbReference>
<dbReference type="CDD" id="cd13403">
    <property type="entry name" value="MLTF-like"/>
    <property type="match status" value="1"/>
</dbReference>
<dbReference type="CDD" id="cd01009">
    <property type="entry name" value="PBP2_YfhD_N"/>
    <property type="match status" value="1"/>
</dbReference>
<dbReference type="FunFam" id="1.10.530.10:FF:000003">
    <property type="entry name" value="Membrane-bound lytic murein transglycosylase F"/>
    <property type="match status" value="1"/>
</dbReference>
<dbReference type="FunFam" id="3.40.190.10:FF:000051">
    <property type="entry name" value="Membrane-bound lytic murein transglycosylase F"/>
    <property type="match status" value="1"/>
</dbReference>
<dbReference type="Gene3D" id="1.10.530.10">
    <property type="match status" value="1"/>
</dbReference>
<dbReference type="Gene3D" id="3.40.190.10">
    <property type="entry name" value="Periplasmic binding protein-like II"/>
    <property type="match status" value="2"/>
</dbReference>
<dbReference type="HAMAP" id="MF_02016">
    <property type="entry name" value="MltF"/>
    <property type="match status" value="1"/>
</dbReference>
<dbReference type="InterPro" id="IPR023346">
    <property type="entry name" value="Lysozyme-like_dom_sf"/>
</dbReference>
<dbReference type="InterPro" id="IPR023703">
    <property type="entry name" value="MltF"/>
</dbReference>
<dbReference type="InterPro" id="IPR001638">
    <property type="entry name" value="Solute-binding_3/MltF_N"/>
</dbReference>
<dbReference type="InterPro" id="IPR000189">
    <property type="entry name" value="Transglyc_AS"/>
</dbReference>
<dbReference type="InterPro" id="IPR008258">
    <property type="entry name" value="Transglycosylase_SLT_dom_1"/>
</dbReference>
<dbReference type="NCBIfam" id="NF008112">
    <property type="entry name" value="PRK10859.1"/>
    <property type="match status" value="1"/>
</dbReference>
<dbReference type="PANTHER" id="PTHR35936">
    <property type="entry name" value="MEMBRANE-BOUND LYTIC MUREIN TRANSGLYCOSYLASE F"/>
    <property type="match status" value="1"/>
</dbReference>
<dbReference type="PANTHER" id="PTHR35936:SF32">
    <property type="entry name" value="MEMBRANE-BOUND LYTIC MUREIN TRANSGLYCOSYLASE F"/>
    <property type="match status" value="1"/>
</dbReference>
<dbReference type="Pfam" id="PF00497">
    <property type="entry name" value="SBP_bac_3"/>
    <property type="match status" value="1"/>
</dbReference>
<dbReference type="Pfam" id="PF01464">
    <property type="entry name" value="SLT"/>
    <property type="match status" value="1"/>
</dbReference>
<dbReference type="SMART" id="SM00062">
    <property type="entry name" value="PBPb"/>
    <property type="match status" value="1"/>
</dbReference>
<dbReference type="SUPFAM" id="SSF53955">
    <property type="entry name" value="Lysozyme-like"/>
    <property type="match status" value="1"/>
</dbReference>
<dbReference type="SUPFAM" id="SSF53850">
    <property type="entry name" value="Periplasmic binding protein-like II"/>
    <property type="match status" value="1"/>
</dbReference>
<dbReference type="PROSITE" id="PS00922">
    <property type="entry name" value="TRANSGLYCOSYLASE"/>
    <property type="match status" value="1"/>
</dbReference>
<accession>Q8FF25</accession>
<keyword id="KW-0998">Cell outer membrane</keyword>
<keyword id="KW-0961">Cell wall biogenesis/degradation</keyword>
<keyword id="KW-0456">Lyase</keyword>
<keyword id="KW-0472">Membrane</keyword>
<keyword id="KW-1185">Reference proteome</keyword>
<keyword id="KW-0732">Signal</keyword>
<proteinExistence type="inferred from homology"/>
<evidence type="ECO:0000255" key="1">
    <source>
        <dbReference type="HAMAP-Rule" id="MF_02016"/>
    </source>
</evidence>
<gene>
    <name evidence="1" type="primary">mltF</name>
    <name type="ordered locus">c3081</name>
</gene>
<reference key="1">
    <citation type="journal article" date="2002" name="Proc. Natl. Acad. Sci. U.S.A.">
        <title>Extensive mosaic structure revealed by the complete genome sequence of uropathogenic Escherichia coli.</title>
        <authorList>
            <person name="Welch R.A."/>
            <person name="Burland V."/>
            <person name="Plunkett G. III"/>
            <person name="Redford P."/>
            <person name="Roesch P."/>
            <person name="Rasko D."/>
            <person name="Buckles E.L."/>
            <person name="Liou S.-R."/>
            <person name="Boutin A."/>
            <person name="Hackett J."/>
            <person name="Stroud D."/>
            <person name="Mayhew G.F."/>
            <person name="Rose D.J."/>
            <person name="Zhou S."/>
            <person name="Schwartz D.C."/>
            <person name="Perna N.T."/>
            <person name="Mobley H.L.T."/>
            <person name="Donnenberg M.S."/>
            <person name="Blattner F.R."/>
        </authorList>
    </citation>
    <scope>NUCLEOTIDE SEQUENCE [LARGE SCALE GENOMIC DNA]</scope>
    <source>
        <strain>CFT073 / ATCC 700928 / UPEC</strain>
    </source>
</reference>
<protein>
    <recommendedName>
        <fullName evidence="1">Membrane-bound lytic murein transglycosylase F</fullName>
        <ecNumber evidence="1">4.2.2.n1</ecNumber>
    </recommendedName>
    <alternativeName>
        <fullName evidence="1">Murein lyase F</fullName>
    </alternativeName>
</protein>